<accession>P0AE16</accession>
<accession>P36670</accession>
<accession>Q2MBZ3</accession>
<comment type="function">
    <text evidence="1 4 5">Permease involved in cell wall peptidoglycan recycling (PubMed:12426329, PubMed:8878601). Transports, from the periplasm into the cytoplasm, the disaccharide N-acetylglucosaminyl-beta-1,4-anhydro-N-acetylmuramic acid (GlcNAc-anhMurNAc) and GlcNAc-anhMurNAc-peptides (PubMed:12426329). Transport is dependent on the proton motive force (PubMed:12426329). AmpG is also involved in beta-lactamase induction (PubMed:7773404).</text>
</comment>
<comment type="activity regulation">
    <text evidence="1">Uptake is inhibited by carbonyl cyanide m-chlorophenylhydrazone (CCCP).</text>
</comment>
<comment type="subcellular location">
    <subcellularLocation>
        <location evidence="2 3">Cell inner membrane</location>
        <topology evidence="2">Multi-pass membrane protein</topology>
    </subcellularLocation>
</comment>
<comment type="domain">
    <text evidence="2">Four hydrophobic segments are not embedded in the cytoplasmic membrane and form two large cytoplasmic loops.</text>
</comment>
<comment type="similarity">
    <text evidence="9">Belongs to the major facilitator superfamily.</text>
</comment>
<gene>
    <name evidence="8" type="primary">ampG</name>
    <name type="ordered locus">b0433</name>
    <name type="ordered locus">JW0423</name>
</gene>
<proteinExistence type="evidence at protein level"/>
<name>AMPG_ECOLI</name>
<reference key="1">
    <citation type="journal article" date="1993" name="Mol. Microbiol.">
        <title>AmpG, a signal transducer in chromosomal beta-lactamase induction.</title>
        <authorList>
            <person name="Lindquist S."/>
            <person name="Weston-Hafer K."/>
            <person name="Schmidt H."/>
            <person name="Pul C."/>
            <person name="Korfmann G."/>
            <person name="Erickson J."/>
            <person name="Sanders C."/>
            <person name="Martin H.H."/>
            <person name="Normark S."/>
        </authorList>
    </citation>
    <scope>NUCLEOTIDE SEQUENCE [GENOMIC DNA]</scope>
</reference>
<reference key="2">
    <citation type="journal article" date="1995" name="Microbiology">
        <title>The signal transducer encoded by ampG is essential for induction of chromosomal AmpC beta-lactamase in Escherichia coli by beta-lactam antibiotics and 'unspecific' inducers.</title>
        <authorList>
            <person name="Schmidt H."/>
            <person name="Korfmann G."/>
            <person name="Barth H."/>
            <person name="Martin H.H."/>
        </authorList>
    </citation>
    <scope>NUCLEOTIDE SEQUENCE [GENOMIC DNA]</scope>
    <scope>FUNCTION</scope>
    <source>
        <strain>SN0301-1</strain>
        <strain>SN0301-3</strain>
        <strain>SN0301-5</strain>
    </source>
</reference>
<reference key="3">
    <citation type="submission" date="1997-01" db="EMBL/GenBank/DDBJ databases">
        <title>Sequence of minutes 4-25 of Escherichia coli.</title>
        <authorList>
            <person name="Chung E."/>
            <person name="Allen E."/>
            <person name="Araujo R."/>
            <person name="Aparicio A.M."/>
            <person name="Davis K."/>
            <person name="Duncan M."/>
            <person name="Federspiel N."/>
            <person name="Hyman R."/>
            <person name="Kalman S."/>
            <person name="Komp C."/>
            <person name="Kurdi O."/>
            <person name="Lew H."/>
            <person name="Lin D."/>
            <person name="Namath A."/>
            <person name="Oefner P."/>
            <person name="Roberts D."/>
            <person name="Schramm S."/>
            <person name="Davis R.W."/>
        </authorList>
    </citation>
    <scope>NUCLEOTIDE SEQUENCE [LARGE SCALE GENOMIC DNA]</scope>
    <source>
        <strain>K12 / MG1655 / ATCC 47076</strain>
    </source>
</reference>
<reference key="4">
    <citation type="journal article" date="1997" name="Science">
        <title>The complete genome sequence of Escherichia coli K-12.</title>
        <authorList>
            <person name="Blattner F.R."/>
            <person name="Plunkett G. III"/>
            <person name="Bloch C.A."/>
            <person name="Perna N.T."/>
            <person name="Burland V."/>
            <person name="Riley M."/>
            <person name="Collado-Vides J."/>
            <person name="Glasner J.D."/>
            <person name="Rode C.K."/>
            <person name="Mayhew G.F."/>
            <person name="Gregor J."/>
            <person name="Davis N.W."/>
            <person name="Kirkpatrick H.A."/>
            <person name="Goeden M.A."/>
            <person name="Rose D.J."/>
            <person name="Mau B."/>
            <person name="Shao Y."/>
        </authorList>
    </citation>
    <scope>NUCLEOTIDE SEQUENCE [LARGE SCALE GENOMIC DNA]</scope>
    <source>
        <strain>K12 / MG1655 / ATCC 47076</strain>
    </source>
</reference>
<reference key="5">
    <citation type="journal article" date="2006" name="Mol. Syst. Biol.">
        <title>Highly accurate genome sequences of Escherichia coli K-12 strains MG1655 and W3110.</title>
        <authorList>
            <person name="Hayashi K."/>
            <person name="Morooka N."/>
            <person name="Yamamoto Y."/>
            <person name="Fujita K."/>
            <person name="Isono K."/>
            <person name="Choi S."/>
            <person name="Ohtsubo E."/>
            <person name="Baba T."/>
            <person name="Wanner B.L."/>
            <person name="Mori H."/>
            <person name="Horiuchi T."/>
        </authorList>
    </citation>
    <scope>NUCLEOTIDE SEQUENCE [LARGE SCALE GENOMIC DNA]</scope>
    <source>
        <strain>K12 / W3110 / ATCC 27325 / DSM 5911</strain>
    </source>
</reference>
<reference key="6">
    <citation type="journal article" date="1996" name="Antimicrob. Agents Chemother.">
        <title>Location of N-acetylmuramyl-L-alanyl-D-glutamylmesodiaminopimelic acid, presumed signal molecule for beta-lactamase induction, in the bacterial cell.</title>
        <authorList>
            <person name="Dietz H."/>
            <person name="Pfeifle D."/>
            <person name="Wiedemann B."/>
        </authorList>
    </citation>
    <scope>FUNCTION AS A PERMEASE</scope>
</reference>
<reference key="7">
    <citation type="journal article" date="2002" name="J. Bacteriol.">
        <title>Substrate specificity of the AmpG permease required for recycling of cell wall anhydro-muropeptides.</title>
        <authorList>
            <person name="Cheng Q."/>
            <person name="Park J.T."/>
        </authorList>
    </citation>
    <scope>FUNCTION</scope>
    <scope>ACTIVITY REGULATION</scope>
    <source>
        <strain>K12</strain>
    </source>
</reference>
<reference key="8">
    <citation type="journal article" date="2005" name="Antimicrob. Agents Chemother.">
        <title>Membrane topology of the Escherichia coli AmpG permease required for recycling of cell wall anhydromuropeptides and AmpC beta-lactamase induction.</title>
        <authorList>
            <person name="Chahboune A."/>
            <person name="Decaffmeyer M."/>
            <person name="Brasseur R."/>
            <person name="Joris B."/>
        </authorList>
    </citation>
    <scope>SUBCELLULAR LOCATION</scope>
    <scope>TOPOLOGY</scope>
    <scope>DOMAIN</scope>
</reference>
<reference key="9">
    <citation type="journal article" date="2005" name="Science">
        <title>Global topology analysis of the Escherichia coli inner membrane proteome.</title>
        <authorList>
            <person name="Daley D.O."/>
            <person name="Rapp M."/>
            <person name="Granseth E."/>
            <person name="Melen K."/>
            <person name="Drew D."/>
            <person name="von Heijne G."/>
        </authorList>
    </citation>
    <scope>TOPOLOGY [LARGE SCALE ANALYSIS]</scope>
    <scope>SUBCELLULAR LOCATION</scope>
    <source>
        <strain>K12 / MG1655 / ATCC 47076</strain>
    </source>
</reference>
<sequence length="491" mass="53245">MSSQYLRIFQQPRSAILLILGFASGLPLALTSGTLQAWMTVENIDLKTIGFFSLVGQAYVFKFLWSPLMDRYTPPFFGRRRGWLLATQILLLVAIAAMGFLEPGTQLRWMAALAVVIAFCSASQDIVFDAWKTDVLPAEERGAGAAISVLGYRLGMLVSGGLALWLADKWLGWQGMYWLMAALLIPCIIATLLAPEPTDTIPVPKTLEQAVVAPLRDFFGRNNAWLILLLIVLYKLGDAFAMSLTTTFLIRGVGFDAGEVGVVNKTLGLLATIVGALYGGILMQRLSLFRALLIFGILQGASNAGYWLLSITDKHLYSMGAAVFFENLCGGMGTSAFVALLMTLCNKSFSATQFALLSALSAVGRVYVGPVAGWFVEAHGWSTFYLFSVAAAVPGLILLLVCRQTLEYTRVNDNFISRTAYPAGYAFAMWTLAAGVSLLAVWLLLLTMDALDLTHFSFLPALLEVGVLVALSGVVLGGLLDYLALRKTHLT</sequence>
<organism>
    <name type="scientific">Escherichia coli (strain K12)</name>
    <dbReference type="NCBI Taxonomy" id="83333"/>
    <lineage>
        <taxon>Bacteria</taxon>
        <taxon>Pseudomonadati</taxon>
        <taxon>Pseudomonadota</taxon>
        <taxon>Gammaproteobacteria</taxon>
        <taxon>Enterobacterales</taxon>
        <taxon>Enterobacteriaceae</taxon>
        <taxon>Escherichia</taxon>
    </lineage>
</organism>
<feature type="chain" id="PRO_0000084830" description="Anhydromuropeptide permease">
    <location>
        <begin position="1"/>
        <end position="491"/>
    </location>
</feature>
<feature type="topological domain" description="Cytoplasmic" evidence="10">
    <location>
        <begin position="1"/>
        <end position="11"/>
    </location>
</feature>
<feature type="transmembrane region" description="Helical" evidence="10">
    <location>
        <begin position="12"/>
        <end position="32"/>
    </location>
</feature>
<feature type="topological domain" description="Periplasmic" evidence="2">
    <location>
        <begin position="33"/>
        <end position="47"/>
    </location>
</feature>
<feature type="transmembrane region" description="Helical" evidence="10">
    <location>
        <begin position="48"/>
        <end position="61"/>
    </location>
</feature>
<feature type="topological domain" description="Cytoplasmic" evidence="2">
    <location>
        <begin position="62"/>
        <end position="81"/>
    </location>
</feature>
<feature type="transmembrane region" description="Helical" evidence="10">
    <location>
        <begin position="82"/>
        <end position="105"/>
    </location>
</feature>
<feature type="topological domain" description="Periplasmic" evidence="2">
    <location>
        <position position="106"/>
    </location>
</feature>
<feature type="transmembrane region" description="Helical" evidence="10">
    <location>
        <begin position="107"/>
        <end position="124"/>
    </location>
</feature>
<feature type="topological domain" description="Cytoplasmic" evidence="2">
    <location>
        <begin position="125"/>
        <end position="221"/>
    </location>
</feature>
<feature type="transmembrane region" description="Helical" evidence="10">
    <location>
        <begin position="222"/>
        <end position="240"/>
    </location>
</feature>
<feature type="topological domain" description="Periplasmic" evidence="2">
    <location>
        <begin position="241"/>
        <end position="264"/>
    </location>
</feature>
<feature type="transmembrane region" description="Helical" evidence="10">
    <location>
        <begin position="265"/>
        <end position="284"/>
    </location>
</feature>
<feature type="topological domain" description="Cytoplasmic" evidence="2">
    <location>
        <begin position="285"/>
        <end position="287"/>
    </location>
</feature>
<feature type="transmembrane region" description="Helical" evidence="10">
    <location>
        <begin position="288"/>
        <end position="303"/>
    </location>
</feature>
<feature type="topological domain" description="Periplasmic" evidence="2">
    <location>
        <begin position="304"/>
        <end position="327"/>
    </location>
</feature>
<feature type="transmembrane region" description="Helical" evidence="10">
    <location>
        <begin position="328"/>
        <end position="346"/>
    </location>
</feature>
<feature type="topological domain" description="Cytoplasmic" evidence="2">
    <location>
        <begin position="347"/>
        <end position="421"/>
    </location>
</feature>
<feature type="transmembrane region" description="Helical" evidence="10">
    <location>
        <begin position="422"/>
        <end position="453"/>
    </location>
</feature>
<feature type="topological domain" description="Periplasmic" evidence="2">
    <location>
        <begin position="454"/>
        <end position="457"/>
    </location>
</feature>
<feature type="transmembrane region" description="Helical" evidence="10">
    <location>
        <begin position="458"/>
        <end position="485"/>
    </location>
</feature>
<feature type="topological domain" description="Cytoplasmic" evidence="2 3">
    <location>
        <begin position="486"/>
        <end position="491"/>
    </location>
</feature>
<feature type="sequence variant" description="In non-inducible mutant SN0301-1.">
    <original>G</original>
    <variation>D</variation>
    <location>
        <position position="151"/>
    </location>
</feature>
<feature type="sequence variant" description="In non-inducible mutant SN0301-3.">
    <original>G</original>
    <variation>D</variation>
    <location>
        <position position="268"/>
    </location>
</feature>
<feature type="sequence variant" description="In non-inducible mutant SN0301-5.">
    <original>G</original>
    <variation>D</variation>
    <location>
        <position position="373"/>
    </location>
</feature>
<evidence type="ECO:0000269" key="1">
    <source>
    </source>
</evidence>
<evidence type="ECO:0000269" key="2">
    <source>
    </source>
</evidence>
<evidence type="ECO:0000269" key="3">
    <source>
    </source>
</evidence>
<evidence type="ECO:0000269" key="4">
    <source>
    </source>
</evidence>
<evidence type="ECO:0000269" key="5">
    <source>
    </source>
</evidence>
<evidence type="ECO:0000303" key="6">
    <source>
    </source>
</evidence>
<evidence type="ECO:0000303" key="7">
    <source>
    </source>
</evidence>
<evidence type="ECO:0000303" key="8">
    <source>
    </source>
</evidence>
<evidence type="ECO:0000305" key="9"/>
<evidence type="ECO:0000305" key="10">
    <source>
    </source>
</evidence>
<dbReference type="EMBL" id="S67816">
    <property type="protein sequence ID" value="AAB28884.1"/>
    <property type="molecule type" value="Genomic_DNA"/>
</dbReference>
<dbReference type="EMBL" id="X82158">
    <property type="protein sequence ID" value="CAA57651.1"/>
    <property type="molecule type" value="mRNA"/>
</dbReference>
<dbReference type="EMBL" id="X82159">
    <property type="protein sequence ID" value="CAA57652.1"/>
    <property type="molecule type" value="mRNA"/>
</dbReference>
<dbReference type="EMBL" id="X82160">
    <property type="protein sequence ID" value="CAA57653.1"/>
    <property type="molecule type" value="mRNA"/>
</dbReference>
<dbReference type="EMBL" id="U82664">
    <property type="protein sequence ID" value="AAB40189.1"/>
    <property type="molecule type" value="Genomic_DNA"/>
</dbReference>
<dbReference type="EMBL" id="U00096">
    <property type="protein sequence ID" value="AAC73536.1"/>
    <property type="molecule type" value="Genomic_DNA"/>
</dbReference>
<dbReference type="EMBL" id="AP009048">
    <property type="protein sequence ID" value="BAE76213.1"/>
    <property type="molecule type" value="Genomic_DNA"/>
</dbReference>
<dbReference type="PIR" id="S37391">
    <property type="entry name" value="S37391"/>
</dbReference>
<dbReference type="RefSeq" id="NP_414967.1">
    <property type="nucleotide sequence ID" value="NC_000913.3"/>
</dbReference>
<dbReference type="RefSeq" id="WP_000098429.1">
    <property type="nucleotide sequence ID" value="NZ_SSZK01000009.1"/>
</dbReference>
<dbReference type="PDB" id="9C3F">
    <property type="method" value="EM"/>
    <property type="resolution" value="3.78 A"/>
    <property type="chains" value="A=1-491"/>
</dbReference>
<dbReference type="PDBsum" id="9C3F"/>
<dbReference type="SMR" id="P0AE16"/>
<dbReference type="BioGRID" id="4259838">
    <property type="interactions" value="195"/>
</dbReference>
<dbReference type="FunCoup" id="P0AE16">
    <property type="interactions" value="204"/>
</dbReference>
<dbReference type="STRING" id="511145.b0433"/>
<dbReference type="TCDB" id="2.A.1.25.2">
    <property type="family name" value="the major facilitator superfamily (mfs)"/>
</dbReference>
<dbReference type="jPOST" id="P0AE16"/>
<dbReference type="PaxDb" id="511145-b0433"/>
<dbReference type="EnsemblBacteria" id="AAC73536">
    <property type="protein sequence ID" value="AAC73536"/>
    <property type="gene ID" value="b0433"/>
</dbReference>
<dbReference type="GeneID" id="75170451"/>
<dbReference type="GeneID" id="946438"/>
<dbReference type="KEGG" id="ecj:JW0423"/>
<dbReference type="KEGG" id="eco:b0433"/>
<dbReference type="KEGG" id="ecoc:C3026_02115"/>
<dbReference type="PATRIC" id="fig|1411691.4.peg.1844"/>
<dbReference type="EchoBASE" id="EB2100"/>
<dbReference type="eggNOG" id="COG2223">
    <property type="taxonomic scope" value="Bacteria"/>
</dbReference>
<dbReference type="HOGENOM" id="CLU_029352_1_0_6"/>
<dbReference type="InParanoid" id="P0AE16"/>
<dbReference type="OMA" id="PFYVDMG"/>
<dbReference type="OrthoDB" id="9787815at2"/>
<dbReference type="PhylomeDB" id="P0AE16"/>
<dbReference type="BioCyc" id="EcoCyc:AMPG-MONOMER"/>
<dbReference type="BioCyc" id="MetaCyc:AMPG-MONOMER"/>
<dbReference type="PRO" id="PR:P0AE16"/>
<dbReference type="Proteomes" id="UP000000625">
    <property type="component" value="Chromosome"/>
</dbReference>
<dbReference type="GO" id="GO:0005886">
    <property type="term" value="C:plasma membrane"/>
    <property type="evidence" value="ECO:0000314"/>
    <property type="project" value="EcoCyc"/>
</dbReference>
<dbReference type="GO" id="GO:0015647">
    <property type="term" value="F:peptidoglycan transmembrane transporter activity"/>
    <property type="evidence" value="ECO:0000314"/>
    <property type="project" value="EcoCyc"/>
</dbReference>
<dbReference type="GO" id="GO:0015293">
    <property type="term" value="F:symporter activity"/>
    <property type="evidence" value="ECO:0007669"/>
    <property type="project" value="UniProtKB-KW"/>
</dbReference>
<dbReference type="GO" id="GO:0071555">
    <property type="term" value="P:cell wall organization"/>
    <property type="evidence" value="ECO:0007669"/>
    <property type="project" value="UniProtKB-KW"/>
</dbReference>
<dbReference type="GO" id="GO:0009254">
    <property type="term" value="P:peptidoglycan turnover"/>
    <property type="evidence" value="ECO:0000315"/>
    <property type="project" value="EcoCyc"/>
</dbReference>
<dbReference type="CDD" id="cd17486">
    <property type="entry name" value="MFS_AmpG_like"/>
    <property type="match status" value="1"/>
</dbReference>
<dbReference type="FunFam" id="1.20.1250.20:FF:000072">
    <property type="entry name" value="Muropeptide transporter AmpG"/>
    <property type="match status" value="1"/>
</dbReference>
<dbReference type="FunFam" id="1.20.1250.20:FF:000080">
    <property type="entry name" value="Muropeptide transporter AmpG"/>
    <property type="match status" value="1"/>
</dbReference>
<dbReference type="Gene3D" id="1.20.1250.20">
    <property type="entry name" value="MFS general substrate transporter like domains"/>
    <property type="match status" value="2"/>
</dbReference>
<dbReference type="InterPro" id="IPR004752">
    <property type="entry name" value="AmpG_permease/AT-1"/>
</dbReference>
<dbReference type="InterPro" id="IPR011701">
    <property type="entry name" value="MFS"/>
</dbReference>
<dbReference type="InterPro" id="IPR020846">
    <property type="entry name" value="MFS_dom"/>
</dbReference>
<dbReference type="InterPro" id="IPR036259">
    <property type="entry name" value="MFS_trans_sf"/>
</dbReference>
<dbReference type="NCBIfam" id="TIGR00901">
    <property type="entry name" value="2A0125"/>
    <property type="match status" value="1"/>
</dbReference>
<dbReference type="NCBIfam" id="NF008238">
    <property type="entry name" value="PRK11010.1"/>
    <property type="match status" value="1"/>
</dbReference>
<dbReference type="NCBIfam" id="NF008867">
    <property type="entry name" value="PRK11902.1"/>
    <property type="match status" value="1"/>
</dbReference>
<dbReference type="PANTHER" id="PTHR12778:SF10">
    <property type="entry name" value="MAJOR FACILITATOR SUPERFAMILY DOMAIN-CONTAINING PROTEIN 3"/>
    <property type="match status" value="1"/>
</dbReference>
<dbReference type="PANTHER" id="PTHR12778">
    <property type="entry name" value="SOLUTE CARRIER FAMILY 33 ACETYL-COA TRANSPORTER -RELATED"/>
    <property type="match status" value="1"/>
</dbReference>
<dbReference type="Pfam" id="PF07690">
    <property type="entry name" value="MFS_1"/>
    <property type="match status" value="1"/>
</dbReference>
<dbReference type="SUPFAM" id="SSF103473">
    <property type="entry name" value="MFS general substrate transporter"/>
    <property type="match status" value="1"/>
</dbReference>
<dbReference type="PROSITE" id="PS50850">
    <property type="entry name" value="MFS"/>
    <property type="match status" value="1"/>
</dbReference>
<keyword id="KW-0002">3D-structure</keyword>
<keyword id="KW-0997">Cell inner membrane</keyword>
<keyword id="KW-1003">Cell membrane</keyword>
<keyword id="KW-0961">Cell wall biogenesis/degradation</keyword>
<keyword id="KW-0472">Membrane</keyword>
<keyword id="KW-1185">Reference proteome</keyword>
<keyword id="KW-0769">Symport</keyword>
<keyword id="KW-0812">Transmembrane</keyword>
<keyword id="KW-1133">Transmembrane helix</keyword>
<keyword id="KW-0813">Transport</keyword>
<protein>
    <recommendedName>
        <fullName evidence="7">Anhydromuropeptide permease</fullName>
    </recommendedName>
    <alternativeName>
        <fullName evidence="6 7">AmpG permease</fullName>
    </alternativeName>
    <alternativeName>
        <fullName evidence="9">Muropeptide:H(+) symporter</fullName>
    </alternativeName>
</protein>